<organism>
    <name type="scientific">Olivierus martensii</name>
    <name type="common">Manchurian scorpion</name>
    <name type="synonym">Mesobuthus martensii</name>
    <dbReference type="NCBI Taxonomy" id="34649"/>
    <lineage>
        <taxon>Eukaryota</taxon>
        <taxon>Metazoa</taxon>
        <taxon>Ecdysozoa</taxon>
        <taxon>Arthropoda</taxon>
        <taxon>Chelicerata</taxon>
        <taxon>Arachnida</taxon>
        <taxon>Scorpiones</taxon>
        <taxon>Buthida</taxon>
        <taxon>Buthoidea</taxon>
        <taxon>Buthidae</taxon>
        <taxon>Olivierus</taxon>
    </lineage>
</organism>
<keyword id="KW-0002">3D-structure</keyword>
<keyword id="KW-0123">Cardiotoxin</keyword>
<keyword id="KW-0903">Direct protein sequencing</keyword>
<keyword id="KW-1015">Disulfide bond</keyword>
<keyword id="KW-0872">Ion channel impairing toxin</keyword>
<keyword id="KW-0528">Neurotoxin</keyword>
<keyword id="KW-0964">Secreted</keyword>
<keyword id="KW-0732">Signal</keyword>
<keyword id="KW-0800">Toxin</keyword>
<keyword id="KW-0738">Voltage-gated sodium channel impairing toxin</keyword>
<sequence length="84" mass="9496">MNYLVMISFALLLMTGVESVRDAYIAKPHNCVYECARNEYCNDLCTKNGAKSGYCQWVGKYGNGCWCIELPDNVPIRVPGKCHR</sequence>
<feature type="signal peptide" evidence="13">
    <location>
        <begin position="1"/>
        <end position="19"/>
    </location>
</feature>
<feature type="chain" id="PRO_0000035236" description="Alpha-like toxin BmK M1" evidence="13">
    <location>
        <begin position="20"/>
        <end position="83"/>
    </location>
</feature>
<feature type="propeptide" id="PRO_0000035237" description="Removed by a carboxypeptidase" evidence="26">
    <location>
        <position position="84"/>
    </location>
</feature>
<feature type="domain" description="LCN-type CS-alpha/beta" evidence="1">
    <location>
        <begin position="21"/>
        <end position="83"/>
    </location>
</feature>
<feature type="disulfide bond" evidence="2 7 9 28 29 30 31 32 33 34 35 36 37 38">
    <location>
        <begin position="31"/>
        <end position="82"/>
    </location>
</feature>
<feature type="disulfide bond" evidence="2 7 9 28 29 30 31 32 33 34 35 36 37 38">
    <location>
        <begin position="35"/>
        <end position="55"/>
    </location>
</feature>
<feature type="disulfide bond" evidence="2 7 9 28 29 30 31 32 33 34 35 36 37 38">
    <location>
        <begin position="41"/>
        <end position="65"/>
    </location>
</feature>
<feature type="disulfide bond" evidence="2 7 9 28 29 30 31 32 33 34 35 36 37 38">
    <location>
        <begin position="45"/>
        <end position="67"/>
    </location>
</feature>
<feature type="mutagenesis site" description="7.7-fold decrease in toxicity to mice, 3.2-fold decrease in activity on Nav1.5/SCN5A, and 17.2-fold decrease in activity on insect sodium channels." evidence="8">
    <location>
        <begin position="20"/>
        <end position="22"/>
    </location>
</feature>
<feature type="mutagenesis site" description="1.2-fold decrease in toxicity to mice, 8.6-fold decrease in activity on Nav1.5/SCN5A, and 2.5-fold decrease in activity on insect sodium channels." evidence="8">
    <location>
        <position position="20"/>
    </location>
</feature>
<feature type="mutagenesis site" description="2.4-fold decrease in toxicity to mice, 15.2-fold decrease in activity on Nav1.5/SCN5A, and 43.3-fold decrease in activity on insect sodium channels." evidence="8">
    <original>R</original>
    <variation>A</variation>
    <location>
        <position position="21"/>
    </location>
</feature>
<feature type="mutagenesis site" description="2.5-fold decrease in toxicity to mice, 1.6-fold decrease in activity on Nav1.5/SCN5A, and 22.3-fold decrease in activity on insect sodium channels." evidence="8">
    <original>R</original>
    <variation>E</variation>
    <location>
        <position position="21"/>
    </location>
</feature>
<feature type="mutagenesis site" description="1.3-fold decrease in toxicity to mice, 16.8-fold decrease in activity on Nav1.5/SCN5A, and 7.5-fold decrease in activity on insect sodium channels." evidence="8">
    <original>D</original>
    <variation>A</variation>
    <location>
        <position position="22"/>
    </location>
</feature>
<feature type="mutagenesis site" description="1.4-fold increase in toxicity to mice, 1.4-fold increase in activity on Nav1.5/SCN5A, and 3.9-fold decrease in activity on insect sodium channels." evidence="8">
    <original>D</original>
    <variation>N</variation>
    <location>
        <position position="22"/>
    </location>
</feature>
<feature type="mutagenesis site" description="25-fold decrease in toxicity to mice." evidence="4 5">
    <original>Y</original>
    <variation>F</variation>
    <location>
        <position position="24"/>
    </location>
</feature>
<feature type="mutagenesis site" description="Complete loss of toxicity to mice, and 70-fold decrease in the binding affinity for insect sodium channels." evidence="4 5">
    <original>Y</original>
    <variation>G</variation>
    <location>
        <position position="24"/>
    </location>
</feature>
<feature type="mutagenesis site" description="&gt;47-fold decrease in toxicity to mice, 2.4-fold decrease in activity on Nav1.5/SCN5A, and 70-fold decrease in activity on insect sodium channels." evidence="8">
    <original>I</original>
    <variation>G</variation>
    <location>
        <position position="25"/>
    </location>
</feature>
<feature type="mutagenesis site" description="43.4-fold decrease in toxicity to mice, 170-fold decrease in the binding affinity for insect sodium channels.">
    <original>KP</original>
    <variation>DS</variation>
    <location>
        <begin position="27"/>
        <end position="28"/>
    </location>
</feature>
<feature type="mutagenesis site" description="118-fold decrease in toxicity to mice, and 250-fold decrease in the binding affinity for insect sodium channels." evidence="5 7">
    <original>K</original>
    <variation>D</variation>
    <location>
        <position position="27"/>
    </location>
</feature>
<feature type="mutagenesis site" description="3.3-fold increase in toxicity to mice, 7-fold decrease in activity on Nav1.5/SCN5A, and 5.1-fold decrease in activity on insect sodium channels." evidence="8">
    <original>PH</original>
    <variation>NY</variation>
    <location>
        <begin position="28"/>
        <end position="29"/>
    </location>
</feature>
<feature type="mutagenesis site" description="1.9-fold increase in toxicity to mice, 1.3-fold increase in activity on Nav1.5/SCN5A, and 24.1-fold decrease in activity on insect sodium channels." evidence="8">
    <original>P</original>
    <variation>N</variation>
    <location>
        <position position="28"/>
    </location>
</feature>
<feature type="mutagenesis site" description="1.8-fold decrease in toxicity to mice, and 1.3-fold decrease in the binding affinity for insect sodium channels." evidence="5 7">
    <original>P</original>
    <variation>S</variation>
    <location>
        <position position="28"/>
    </location>
</feature>
<feature type="mutagenesis site" description="1.7-fold decrease in toxicity to mice, and 0.8-fold decrease in the binding affinity for insect sodium channels." evidence="5">
    <original>H</original>
    <variation>E</variation>
    <location>
        <position position="29"/>
    </location>
</feature>
<feature type="mutagenesis site" description="2.2-fold decrease in toxicity to mice, 6.8-fold increase in activity on Nav1.5/SCN5A, and 1.8-fold decrease in activity on insect sodium channels." evidence="8">
    <original>H</original>
    <variation>Y</variation>
    <location>
        <position position="29"/>
    </location>
</feature>
<feature type="mutagenesis site" description="Complete loss of toxicity to mice, 380-fold decrease in the binding affinity for insect sodium channels." evidence="5">
    <original>N</original>
    <variation>A</variation>
    <location>
        <position position="30"/>
    </location>
</feature>
<feature type="mutagenesis site" description="1.9-fold decrease in toxicity to mice, and 1.4-fold decrease in the binding affinity for insect sodium channels." evidence="5">
    <original>Y</original>
    <variation>G</variation>
    <location>
        <position position="40"/>
    </location>
</feature>
<feature type="mutagenesis site" description="4.1-fold decrease in toxicity to mice, and 14-fold decrease in the binding affinity for insect sodium channels." evidence="5">
    <original>K</original>
    <variation>E</variation>
    <location>
        <position position="47"/>
    </location>
</feature>
<feature type="mutagenesis site" description="38-fold decrease in toxicity to mice, 11.2-fold decrease in activity on Nav1.5/SCN5A, and 43.3-fold decrease in activity on insect sodium channels." evidence="8">
    <original>G</original>
    <variation>A</variation>
    <location>
        <position position="53"/>
    </location>
</feature>
<feature type="mutagenesis site" description="More than 50-fold decrease in toxicity to mice." evidence="4">
    <original>W</original>
    <variation>G</variation>
    <location>
        <position position="57"/>
    </location>
</feature>
<feature type="mutagenesis site" description="More than 50-fold decrease in toxicity to mice." evidence="4">
    <original>Y</original>
    <variation>G</variation>
    <location>
        <position position="61"/>
    </location>
</feature>
<feature type="mutagenesis site" description="&gt;47-fold decrease in toxicity to mice, loss of activity on Nav1.5/SCN5A, and 56.7-fold decrease in activity on insect sodium channels." evidence="8">
    <original>G</original>
    <variation>A</variation>
    <location>
        <position position="62"/>
    </location>
</feature>
<feature type="mutagenesis site" description="&gt;47-fold decrease in toxicity to mice, loss of activity on Nav1.5/SCN5A, and 233.3-fold decrease in activity on insect sodium channels." evidence="8">
    <original>L</original>
    <variation>G</variation>
    <location>
        <position position="70"/>
    </location>
</feature>
<feature type="mutagenesis site" description="Not tested in mice, 1.2-fold decrease in activity on Nav1.5/SCN5A, and 16.9-fold decrease in activity on insect sodium channels." evidence="8">
    <original>P</original>
    <variation>S</variation>
    <location>
        <position position="71"/>
    </location>
</feature>
<feature type="mutagenesis site" description="0.6-fold decrease in toxicity to mice, and 0.2-fold decrease in the binding affinity for insect sodium channels." evidence="5">
    <original>D</original>
    <variation>A</variation>
    <location>
        <position position="72"/>
    </location>
</feature>
<feature type="mutagenesis site" description="1.1-fold decrease in toxicity to mice, loss of activity on Nav1.5/SCN5A, and 2.5-fold decrease in activity on insect sodium channels." evidence="8">
    <original>I</original>
    <variation>G</variation>
    <location>
        <position position="76"/>
    </location>
</feature>
<feature type="mutagenesis site" description="Complete loss of toxicity to mice, and complete loss of affinity for insect sodium channels." evidence="5">
    <original>R</original>
    <variation>A</variation>
    <location>
        <position position="77"/>
    </location>
</feature>
<feature type="mutagenesis site" description="1.3-fold decrease in toxicity to mice, 2.6-fold decrease in activity on Nav1.5/SCN5A, and 2.2-fold decrease in activity on insect sodium channels." evidence="8">
    <original>V</original>
    <variation>G</variation>
    <location>
        <position position="78"/>
    </location>
</feature>
<feature type="mutagenesis site" description="1.1-fold increase in toxicity to mice, 5.8-fold decrease in activity on Nav1.5/SCN5A, and 20.4-fold decrease in activity on insect sodium channels." evidence="8">
    <original>P</original>
    <variation>A</variation>
    <location>
        <position position="79"/>
    </location>
</feature>
<feature type="mutagenesis site" description="1.7-fold decrease in toxicity to mice, 1.3-fold increase in activity on Nav1.5/SCN5A, and 1.7-fold increase in activity on insect sodium channels." evidence="8">
    <original>P</original>
    <variation>G</variation>
    <location>
        <position position="79"/>
    </location>
</feature>
<feature type="mutagenesis site" description="35-fold decrease in toxicity to mice, loss of activity on Nav1.5/SCN5A, and 7.8-fold decrease in activity on insect sodium channels." evidence="8">
    <original>G</original>
    <variation>A</variation>
    <location>
        <position position="80"/>
    </location>
</feature>
<feature type="mutagenesis site" description="71.4-fold decrease in toxicity to mice, and 170-fold decrease in the binding affinity for insect sodium channels." evidence="5">
    <original>K</original>
    <variation>E</variation>
    <location>
        <position position="81"/>
    </location>
</feature>
<feature type="mutagenesis site" description="3.8-fold decrease in toxicity to mice, and 180-fold decrease in the binding affinity for insect sodium channels." evidence="5">
    <original>H</original>
    <variation>A</variation>
    <location>
        <position position="83"/>
    </location>
</feature>
<feature type="mutagenesis site" description="43.9-fold decrease in toxicity to mice, and 96-fold decrease in the binding affinity for insect sodium channels." evidence="5">
    <original>H</original>
    <variation>D</variation>
    <location>
        <position position="83"/>
    </location>
</feature>
<feature type="mutagenesis site" description="1.9-fold decrease in toxicity to mice, and 11.5-fold decrease in the binding affinity for insect sodium channels." evidence="5">
    <original>H</original>
    <variation>K</variation>
    <location>
        <position position="83"/>
    </location>
</feature>
<feature type="sequence conflict" description="In Ref. 2; AA sequence." evidence="26" ref="2">
    <original>N</original>
    <variation>D</variation>
    <location>
        <position position="48"/>
    </location>
</feature>
<feature type="strand" evidence="39">
    <location>
        <begin position="21"/>
        <end position="27"/>
    </location>
</feature>
<feature type="turn" evidence="39">
    <location>
        <begin position="28"/>
        <end position="30"/>
    </location>
</feature>
<feature type="helix" evidence="39">
    <location>
        <begin position="38"/>
        <end position="47"/>
    </location>
</feature>
<feature type="strand" evidence="39">
    <location>
        <begin position="51"/>
        <end position="59"/>
    </location>
</feature>
<feature type="strand" evidence="39">
    <location>
        <begin position="62"/>
        <end position="70"/>
    </location>
</feature>
<evidence type="ECO:0000255" key="1">
    <source>
        <dbReference type="PROSITE-ProRule" id="PRU01210"/>
    </source>
</evidence>
<evidence type="ECO:0000269" key="2">
    <source>
    </source>
</evidence>
<evidence type="ECO:0000269" key="3">
    <source>
    </source>
</evidence>
<evidence type="ECO:0000269" key="4">
    <source>
    </source>
</evidence>
<evidence type="ECO:0000269" key="5">
    <source>
    </source>
</evidence>
<evidence type="ECO:0000269" key="6">
    <source>
    </source>
</evidence>
<evidence type="ECO:0000269" key="7">
    <source>
    </source>
</evidence>
<evidence type="ECO:0000269" key="8">
    <source>
    </source>
</evidence>
<evidence type="ECO:0000269" key="9">
    <source>
    </source>
</evidence>
<evidence type="ECO:0000269" key="10">
    <source>
    </source>
</evidence>
<evidence type="ECO:0000269" key="11">
    <source>
    </source>
</evidence>
<evidence type="ECO:0000269" key="12">
    <source>
    </source>
</evidence>
<evidence type="ECO:0000269" key="13">
    <source>
    </source>
</evidence>
<evidence type="ECO:0000303" key="14">
    <source>
    </source>
</evidence>
<evidence type="ECO:0000303" key="15">
    <source>
    </source>
</evidence>
<evidence type="ECO:0000303" key="16">
    <source>
    </source>
</evidence>
<evidence type="ECO:0000303" key="17">
    <source>
    </source>
</evidence>
<evidence type="ECO:0000303" key="18">
    <source>
    </source>
</evidence>
<evidence type="ECO:0000303" key="19">
    <source>
    </source>
</evidence>
<evidence type="ECO:0000303" key="20">
    <source>
    </source>
</evidence>
<evidence type="ECO:0000303" key="21">
    <source>
    </source>
</evidence>
<evidence type="ECO:0000303" key="22">
    <source>
    </source>
</evidence>
<evidence type="ECO:0000303" key="23">
    <source>
    </source>
</evidence>
<evidence type="ECO:0000303" key="24">
    <source>
    </source>
</evidence>
<evidence type="ECO:0000303" key="25">
    <source>
    </source>
</evidence>
<evidence type="ECO:0000305" key="26"/>
<evidence type="ECO:0000305" key="27">
    <source>
    </source>
</evidence>
<evidence type="ECO:0000312" key="28">
    <source>
        <dbReference type="PDB" id="1DJT"/>
    </source>
</evidence>
<evidence type="ECO:0000312" key="29">
    <source>
        <dbReference type="PDB" id="1SN1"/>
    </source>
</evidence>
<evidence type="ECO:0000312" key="30">
    <source>
        <dbReference type="PDB" id="1T7A"/>
    </source>
</evidence>
<evidence type="ECO:0000312" key="31">
    <source>
        <dbReference type="PDB" id="1T7B"/>
    </source>
</evidence>
<evidence type="ECO:0000312" key="32">
    <source>
        <dbReference type="PDB" id="1T7E"/>
    </source>
</evidence>
<evidence type="ECO:0000312" key="33">
    <source>
        <dbReference type="PDB" id="1ZU3"/>
    </source>
</evidence>
<evidence type="ECO:0000312" key="34">
    <source>
        <dbReference type="PDB" id="1ZUT"/>
    </source>
</evidence>
<evidence type="ECO:0000312" key="35">
    <source>
        <dbReference type="PDB" id="1ZVE"/>
    </source>
</evidence>
<evidence type="ECO:0000312" key="36">
    <source>
        <dbReference type="PDB" id="1ZVG"/>
    </source>
</evidence>
<evidence type="ECO:0000312" key="37">
    <source>
        <dbReference type="PDB" id="1ZYV"/>
    </source>
</evidence>
<evidence type="ECO:0000312" key="38">
    <source>
        <dbReference type="PDB" id="1ZYW"/>
    </source>
</evidence>
<evidence type="ECO:0007829" key="39">
    <source>
        <dbReference type="PDB" id="1DJT"/>
    </source>
</evidence>
<accession>P45697</accession>
<comment type="function">
    <text evidence="3 5 6 8 10 11 12">Alpha toxins bind voltage-independently at site-3 of sodium channels (Nav) and inhibit the inactivation of the activated channels thereby blocking neuronal transmission. This toxin is active against both mammals and insects, and is classified as an alpha-like toxin. It is active on Nav1.2/SCN2A (EC(50)=139-252 nM), Nav1.3/SCN3A (EC(50)=565 nM), Nav1.4/SCN4A and Nav1.5/SCN5A (EC(50)=195-500 nM), Nav1.6/SCN8A (EC(50)=214 nM), and drosophila DmNav1 (EC(50)=30 nM) (PubMed:11322948, PubMed:12705833, PubMed:15677695, PubMed:19162162, PubMed:20678086). In mNav1.6/SCN8A, the toxin induces a large increase in both transient and persistent currents, which correlates with a prominent reduction in the fast component of inactivating current (PubMed:20678086). In rNav1.2/SCN2A and rNav1.3/SCN3A, toxin-increased currents is much smaller (PubMed:19162162, PubMed:20678086). Moreover, the toxin only accelerates the slow inactivation development and delay recovery of mNav1.6/SCN8A through binding to the channel in the open state (PubMed:20678086). Is 6-fold more toxic than BmK-M2. In vivo, intrahippocampal injection into rat induces epileptiform responses (PubMed:16229835). In addition, intraplantar injection into rat induces spontaneous nociception and hyperalgesia (PubMed:14554105).</text>
</comment>
<comment type="subcellular location">
    <subcellularLocation>
        <location evidence="13">Secreted</location>
    </subcellularLocation>
</comment>
<comment type="tissue specificity">
    <text evidence="27">Expressed by the venom gland.</text>
</comment>
<comment type="domain">
    <text evidence="2 7 9">Has the structural arrangement of an alpha-helix connected to antiparallel beta-sheets by disulfide bonds (CS-alpha/beta).</text>
</comment>
<comment type="toxic dose">
    <text evidence="5">LD(50) is 0.75 mg/kg by intravenous injection into mice.</text>
</comment>
<comment type="toxic dose">
    <text evidence="5 8">LD(50) is 0.53 mg/kg by intravenous injection into tail mice.</text>
</comment>
<comment type="miscellaneous">
    <text evidence="7">Exists in two forms, due to cis-trans isomerization at 28-Pro-His-29.</text>
</comment>
<comment type="miscellaneous">
    <text evidence="5 8">Negative results: has insignificant effect on Nav1.2/SCN2A.</text>
</comment>
<comment type="similarity">
    <text evidence="26">Belongs to the long (4 C-C) scorpion toxin superfamily. Sodium channel inhibitor family. Alpha subfamily.</text>
</comment>
<comment type="sequence caution" evidence="26">
    <conflict type="erroneous initiation">
        <sequence resource="EMBL-CDS" id="AAA69557"/>
    </conflict>
    <text>Truncated N-terminus.</text>
</comment>
<reference key="1">
    <citation type="journal article" date="1997" name="Toxicon">
        <title>The cDNA and genomic DNA sequences of a mammalian neurotoxin from the scorpion Buthus martensii Karsch.</title>
        <authorList>
            <person name="Xiong Y.-M."/>
            <person name="Ling M.-H."/>
            <person name="Wang D.-C."/>
            <person name="Chi C.-W."/>
        </authorList>
    </citation>
    <scope>NUCLEOTIDE SEQUENCE [GENOMIC DNA / MRNA]</scope>
    <source>
        <tissue>Venom gland</tissue>
    </source>
</reference>
<reference key="2">
    <citation type="journal article" date="1996" name="Toxicon">
        <title>Two neurotoxins (BmK I and BmK II) from the venom of the scorpion Buthus martensi Karsch: purification, amino acid sequences and assessment of specific activity.</title>
        <authorList>
            <person name="Ji Y.-H."/>
            <person name="Mansuelle P."/>
            <person name="Terakawa S."/>
            <person name="Kopeyan C."/>
            <person name="Yanaihara N."/>
            <person name="Hsu K."/>
            <person name="Rochat H."/>
        </authorList>
    </citation>
    <scope>PROTEIN SEQUENCE OF 20-83</scope>
    <scope>FUNCTION</scope>
    <scope>SUBCELLULAR LOCATION</scope>
    <source>
        <tissue>Venom</tissue>
    </source>
</reference>
<reference key="3">
    <citation type="journal article" date="2001" name="FEBS Lett.">
        <title>Electrophysiological characterization of BmK M1, an alpha-like toxin from Buthus martensi Karsch venom.</title>
        <authorList>
            <person name="Goudet C."/>
            <person name="Huys I."/>
            <person name="Clynen E."/>
            <person name="Schoofs L."/>
            <person name="Wang D.C."/>
            <person name="Waelkens E."/>
            <person name="Tytgat J."/>
        </authorList>
    </citation>
    <scope>FUNCTION</scope>
    <scope>FUNCTION ON SCN5A SODIUM CHANNELS</scope>
</reference>
<reference key="4">
    <citation type="journal article" date="2003" name="Biochemistry">
        <title>Exploration of the functional site of a scorpion alpha-like toxin by site-directed mutagenesis.</title>
        <authorList>
            <person name="Wang C.-G."/>
            <person name="Gilles N."/>
            <person name="Hamon A."/>
            <person name="Le Gall F."/>
            <person name="Stankiewicz M."/>
            <person name="Pelhate M."/>
            <person name="Xiong Y.-M."/>
            <person name="Wang D.-C."/>
            <person name="Chi C.-W."/>
        </authorList>
    </citation>
    <scope>MUTAGENESIS OF TYR-24; LYS-27; PRO-28; HIS-29; ASN-30; TYR-40; LYS-47; ASP-72; ARG-77; LYS-81 AND HIS-83</scope>
    <scope>FUNCTION ON SCN2A AND SCN4A SODIUM CHANNELS</scope>
    <scope>TOXIC DOSE</scope>
</reference>
<reference key="5">
    <citation type="journal article" date="2003" name="J. Biol. Chem.">
        <title>Importance of the conserved aromatic residues in the scorpion alpha-like toxin BmK M1: the hydrophobic surface region revisited.</title>
        <authorList>
            <person name="Sun Y.-M."/>
            <person name="Bosmans F."/>
            <person name="Zhu R.-H."/>
            <person name="Goudet C."/>
            <person name="Xiong Y.-M."/>
            <person name="Tytgat J."/>
            <person name="Wang D.-C."/>
        </authorList>
    </citation>
    <scope>MUTAGENESIS OF TYR-24; TRP-57 AND TYR-61</scope>
</reference>
<reference key="6">
    <citation type="journal article" date="2003" name="Toxicol. Appl. Pharmacol.">
        <title>Fos expression in rat spinal cord induced by peripheral injection of BmK I, an alpha-like scorpion neurotoxin.</title>
        <authorList>
            <person name="Bai Z.T."/>
            <person name="Zhang X.Y."/>
            <person name="Ji Y.H."/>
        </authorList>
    </citation>
    <scope>FUNCTION</scope>
    <scope>BIOASSAY</scope>
</reference>
<reference key="7">
    <citation type="journal article" date="2005" name="FASEB J.">
        <title>Molecular basis of the mammalian potency of the scorpion alpha-like toxin, BmK M1.</title>
        <authorList>
            <person name="Liu L.-H."/>
            <person name="Bosmans F."/>
            <person name="Maertens C."/>
            <person name="Zhu R.-H."/>
            <person name="Wang D.-C."/>
            <person name="Tytgat J."/>
        </authorList>
    </citation>
    <scope>FUNCTION</scope>
    <scope>TOXIC DOSE</scope>
    <scope>MUTAGENESIS OF VAL-20; ARG-21; ASP-22; ILE-25; PRO-28; HIS-29; GLY-53; GLY-62; LEU-70; PRO-71; ILE-76; VAL-78; PRO-79 AND GLY-80</scope>
</reference>
<reference key="8">
    <citation type="journal article" date="2006" name="Exp. Neurol.">
        <title>The epileptic seizures induced by BmK I, a modulator of sodium channels.</title>
        <authorList>
            <person name="Bai Z.T."/>
            <person name="Zhao R."/>
            <person name="Zhang X.Y."/>
            <person name="Chen J."/>
            <person name="Liu T."/>
            <person name="Ji Y.H."/>
        </authorList>
    </citation>
    <scope>FUNCTION</scope>
    <scope>BIOASSAY</scope>
</reference>
<reference key="9">
    <citation type="journal article" date="2009" name="Toxicol. in Vitro">
        <title>The alpha-like scorpion toxin BmK I enhances membrane excitability via persistent sodium current by preventing slow inactivation and deactivation of rNav1.2a expressed in Xenopus oocytes.</title>
        <authorList>
            <person name="Zhu M.M."/>
            <person name="Tan M."/>
            <person name="Cheng H.W."/>
            <person name="Ji Y.H."/>
        </authorList>
    </citation>
    <scope>FUNCTION</scope>
</reference>
<reference key="10">
    <citation type="journal article" date="2010" name="Biochem. J.">
        <title>Molecular determination of selectivity of the site 3 modulator (BmK I) to sodium channels in the CNS: a clue to the importance of Nav1.6 in BmK I-induced neuronal hyperexcitability.</title>
        <authorList>
            <person name="He H."/>
            <person name="Liu Z."/>
            <person name="Dong B."/>
            <person name="Zhou J."/>
            <person name="Zhu H."/>
            <person name="Ji Y."/>
        </authorList>
    </citation>
    <scope>FUNCTION</scope>
    <source>
        <tissue>Venom</tissue>
    </source>
</reference>
<reference key="11">
    <citation type="journal article" date="1999" name="Acta Crystallogr. D">
        <title>A series of bioactivity-variant neurotoxins from scorpion Buthus martensii Karsch: purification, crystallization and crystallographic analysis.</title>
        <authorList>
            <person name="Li H.-M."/>
            <person name="Zhao T."/>
            <person name="Jin L."/>
            <person name="Wang M."/>
            <person name="Zhang Y."/>
            <person name="Wang D.-C."/>
        </authorList>
    </citation>
    <scope>CRYSTALLIZATION</scope>
    <source>
        <tissue>Venom</tissue>
    </source>
</reference>
<reference key="12">
    <citation type="journal article" date="1999" name="J. Mol. Biol.">
        <title>Crystal structures of two alpha-like scorpion toxins: non-proline cis peptide bonds and implications for new binding site selectivity on the sodium channel.</title>
        <authorList>
            <person name="He X.-L."/>
            <person name="Li H.-M."/>
            <person name="Zeng Z.-H."/>
            <person name="Liu X.-Q."/>
            <person name="Wang M."/>
            <person name="Wang D.-C."/>
        </authorList>
    </citation>
    <scope>X-RAY CRYSTALLOGRAPHY (1.7 ANGSTROMS) OF 20-83</scope>
</reference>
<reference key="13">
    <citation type="journal article" date="2004" name="J. Mol. Biol.">
        <title>Structural mechanism governing cis and trans isomeric states and an intramolecular switch for cis/trans isomerization of a non-proline peptide bond observed in crystal structures of scorpion toxins.</title>
        <authorList>
            <person name="Guan R.-J."/>
            <person name="Xiang Y."/>
            <person name="He X.-L."/>
            <person name="Wang C.-G."/>
            <person name="Wang M."/>
            <person name="Zhang Y."/>
            <person name="Sundberg E.J."/>
            <person name="Wang D.-C."/>
        </authorList>
    </citation>
    <scope>X-RAY CRYSTALLOGRAPHY (1.4 ANGSTROMS) OF 19-83</scope>
    <scope>MUTAGENESIS OF LYS-27 AND PRO-28</scope>
</reference>
<reference key="14">
    <citation type="journal article" date="2005" name="J. Mol. Biol.">
        <title>Structural basis for the voltage-gated Na+ channel selectivity of the scorpion alpha-like toxin BmK M1.</title>
        <authorList>
            <person name="Ye X."/>
            <person name="Bosmans F."/>
            <person name="Li C."/>
            <person name="Zhang Y."/>
            <person name="Wang D.-C."/>
            <person name="Tytgat J."/>
        </authorList>
    </citation>
    <scope>X-RAY CRYSTALLOGRAPHY (1.3 ANGSTROMS) OF 19-83</scope>
    <scope>MUTAGENESIS</scope>
</reference>
<dbReference type="EMBL" id="AF057554">
    <property type="protein sequence ID" value="AAC13693.1"/>
    <property type="molecule type" value="Genomic_DNA"/>
</dbReference>
<dbReference type="EMBL" id="U28659">
    <property type="protein sequence ID" value="AAA69557.1"/>
    <property type="status" value="ALT_INIT"/>
    <property type="molecule type" value="mRNA"/>
</dbReference>
<dbReference type="PDB" id="1DJT">
    <property type="method" value="X-ray"/>
    <property type="resolution" value="1.20 A"/>
    <property type="chains" value="A/B=20-83"/>
</dbReference>
<dbReference type="PDB" id="1SN1">
    <property type="method" value="X-ray"/>
    <property type="resolution" value="1.70 A"/>
    <property type="chains" value="A=20-83"/>
</dbReference>
<dbReference type="PDB" id="1T7A">
    <property type="method" value="X-ray"/>
    <property type="resolution" value="1.50 A"/>
    <property type="chains" value="A=20-83"/>
</dbReference>
<dbReference type="PDB" id="1T7B">
    <property type="method" value="X-ray"/>
    <property type="resolution" value="1.85 A"/>
    <property type="chains" value="A=20-83"/>
</dbReference>
<dbReference type="PDB" id="1T7E">
    <property type="method" value="X-ray"/>
    <property type="resolution" value="1.40 A"/>
    <property type="chains" value="A=20-83"/>
</dbReference>
<dbReference type="PDB" id="1ZU3">
    <property type="method" value="X-ray"/>
    <property type="resolution" value="1.33 A"/>
    <property type="chains" value="A=20-83"/>
</dbReference>
<dbReference type="PDB" id="1ZUT">
    <property type="method" value="X-ray"/>
    <property type="resolution" value="1.70 A"/>
    <property type="chains" value="A=20-83"/>
</dbReference>
<dbReference type="PDB" id="1ZVE">
    <property type="method" value="X-ray"/>
    <property type="resolution" value="1.70 A"/>
    <property type="chains" value="A=20-83"/>
</dbReference>
<dbReference type="PDB" id="1ZVG">
    <property type="method" value="X-ray"/>
    <property type="resolution" value="1.20 A"/>
    <property type="chains" value="A=20-83"/>
</dbReference>
<dbReference type="PDB" id="1ZYV">
    <property type="method" value="X-ray"/>
    <property type="resolution" value="1.50 A"/>
    <property type="chains" value="A=20-83"/>
</dbReference>
<dbReference type="PDB" id="1ZYW">
    <property type="method" value="X-ray"/>
    <property type="resolution" value="1.30 A"/>
    <property type="chains" value="A=20-83"/>
</dbReference>
<dbReference type="PDBsum" id="1DJT"/>
<dbReference type="PDBsum" id="1SN1"/>
<dbReference type="PDBsum" id="1T7A"/>
<dbReference type="PDBsum" id="1T7B"/>
<dbReference type="PDBsum" id="1T7E"/>
<dbReference type="PDBsum" id="1ZU3"/>
<dbReference type="PDBsum" id="1ZUT"/>
<dbReference type="PDBsum" id="1ZVE"/>
<dbReference type="PDBsum" id="1ZVG"/>
<dbReference type="PDBsum" id="1ZYV"/>
<dbReference type="PDBsum" id="1ZYW"/>
<dbReference type="SMR" id="P45697"/>
<dbReference type="TCDB" id="8.B.1.1.1">
    <property type="family name" value="the long (4c-c) scorpion toxin (l-st) superfamily"/>
</dbReference>
<dbReference type="EvolutionaryTrace" id="P45697"/>
<dbReference type="GO" id="GO:0005576">
    <property type="term" value="C:extracellular region"/>
    <property type="evidence" value="ECO:0007669"/>
    <property type="project" value="UniProtKB-SubCell"/>
</dbReference>
<dbReference type="GO" id="GO:0019871">
    <property type="term" value="F:sodium channel inhibitor activity"/>
    <property type="evidence" value="ECO:0007669"/>
    <property type="project" value="InterPro"/>
</dbReference>
<dbReference type="GO" id="GO:0090729">
    <property type="term" value="F:toxin activity"/>
    <property type="evidence" value="ECO:0007669"/>
    <property type="project" value="UniProtKB-KW"/>
</dbReference>
<dbReference type="GO" id="GO:0006952">
    <property type="term" value="P:defense response"/>
    <property type="evidence" value="ECO:0007669"/>
    <property type="project" value="InterPro"/>
</dbReference>
<dbReference type="CDD" id="cd23106">
    <property type="entry name" value="neurotoxins_LC_scorpion"/>
    <property type="match status" value="1"/>
</dbReference>
<dbReference type="FunFam" id="3.30.30.10:FF:000002">
    <property type="entry name" value="Alpha-like toxin BmK-M1"/>
    <property type="match status" value="1"/>
</dbReference>
<dbReference type="Gene3D" id="3.30.30.10">
    <property type="entry name" value="Knottin, scorpion toxin-like"/>
    <property type="match status" value="1"/>
</dbReference>
<dbReference type="InterPro" id="IPR044062">
    <property type="entry name" value="LCN-type_CS_alpha_beta_dom"/>
</dbReference>
<dbReference type="InterPro" id="IPR003614">
    <property type="entry name" value="Scorpion_toxin-like"/>
</dbReference>
<dbReference type="InterPro" id="IPR036574">
    <property type="entry name" value="Scorpion_toxin-like_sf"/>
</dbReference>
<dbReference type="InterPro" id="IPR018218">
    <property type="entry name" value="Scorpion_toxinL"/>
</dbReference>
<dbReference type="InterPro" id="IPR002061">
    <property type="entry name" value="Scorpion_toxinL/defensin"/>
</dbReference>
<dbReference type="Pfam" id="PF00537">
    <property type="entry name" value="Toxin_3"/>
    <property type="match status" value="1"/>
</dbReference>
<dbReference type="PRINTS" id="PR00285">
    <property type="entry name" value="SCORPNTOXIN"/>
</dbReference>
<dbReference type="SMART" id="SM00505">
    <property type="entry name" value="Knot1"/>
    <property type="match status" value="1"/>
</dbReference>
<dbReference type="SUPFAM" id="SSF57095">
    <property type="entry name" value="Scorpion toxin-like"/>
    <property type="match status" value="1"/>
</dbReference>
<dbReference type="PROSITE" id="PS51863">
    <property type="entry name" value="LCN_CSAB"/>
    <property type="match status" value="1"/>
</dbReference>
<proteinExistence type="evidence at protein level"/>
<name>SCM1_OLIMR</name>
<protein>
    <recommendedName>
        <fullName evidence="14 15 16 17 18 20 25">Alpha-like toxin BmK M1</fullName>
        <shortName>BmK-M1</shortName>
        <shortName>BmKM1</shortName>
    </recommendedName>
    <alternativeName>
        <fullName>BmK-I</fullName>
        <shortName evidence="19 21 22 23 24">BmK I</shortName>
        <shortName>BmKI</shortName>
    </alternativeName>
    <alternativeName>
        <fullName>BmK1</fullName>
    </alternativeName>
</protein>